<feature type="chain" id="PRO_0000324899" description="Protein PXR1">
    <location>
        <begin position="1"/>
        <end position="271"/>
    </location>
</feature>
<feature type="domain" description="G-patch" evidence="3">
    <location>
        <begin position="25"/>
        <end position="72"/>
    </location>
</feature>
<feature type="region of interest" description="Disordered" evidence="4">
    <location>
        <begin position="147"/>
        <end position="239"/>
    </location>
</feature>
<feature type="compositionally biased region" description="Acidic residues" evidence="4">
    <location>
        <begin position="157"/>
        <end position="168"/>
    </location>
</feature>
<feature type="compositionally biased region" description="Basic residues" evidence="4">
    <location>
        <begin position="175"/>
        <end position="203"/>
    </location>
</feature>
<feature type="compositionally biased region" description="Basic and acidic residues" evidence="4">
    <location>
        <begin position="204"/>
        <end position="221"/>
    </location>
</feature>
<feature type="modified residue" description="Phosphoserine" evidence="2">
    <location>
        <position position="230"/>
    </location>
</feature>
<organism>
    <name type="scientific">Saccharomyces cerevisiae (strain YJM789)</name>
    <name type="common">Baker's yeast</name>
    <dbReference type="NCBI Taxonomy" id="307796"/>
    <lineage>
        <taxon>Eukaryota</taxon>
        <taxon>Fungi</taxon>
        <taxon>Dikarya</taxon>
        <taxon>Ascomycota</taxon>
        <taxon>Saccharomycotina</taxon>
        <taxon>Saccharomycetes</taxon>
        <taxon>Saccharomycetales</taxon>
        <taxon>Saccharomycetaceae</taxon>
        <taxon>Saccharomyces</taxon>
    </lineage>
</organism>
<accession>A6ZUT6</accession>
<comment type="function">
    <text evidence="1">Involved in rRNA-processing at A0, A1 and A2 sites through its action in U18 and U24 snoRNA 3'-end final trimming. Negative regulator of telomerase throughX competition for binding to EST2 with TLC1 (By similarity).</text>
</comment>
<comment type="subunit">
    <text evidence="1">Interacts with EST2.</text>
</comment>
<comment type="subcellular location">
    <subcellularLocation>
        <location evidence="1">Nucleus</location>
        <location evidence="1">Nucleolus</location>
    </subcellularLocation>
</comment>
<comment type="similarity">
    <text evidence="5">Belongs to the PINX1 family.</text>
</comment>
<proteinExistence type="inferred from homology"/>
<reference key="1">
    <citation type="journal article" date="2007" name="Proc. Natl. Acad. Sci. U.S.A.">
        <title>Genome sequencing and comparative analysis of Saccharomyces cerevisiae strain YJM789.</title>
        <authorList>
            <person name="Wei W."/>
            <person name="McCusker J.H."/>
            <person name="Hyman R.W."/>
            <person name="Jones T."/>
            <person name="Ning Y."/>
            <person name="Cao Z."/>
            <person name="Gu Z."/>
            <person name="Bruno D."/>
            <person name="Miranda M."/>
            <person name="Nguyen M."/>
            <person name="Wilhelmy J."/>
            <person name="Komp C."/>
            <person name="Tamse R."/>
            <person name="Wang X."/>
            <person name="Jia P."/>
            <person name="Luedi P."/>
            <person name="Oefner P.J."/>
            <person name="David L."/>
            <person name="Dietrich F.S."/>
            <person name="Li Y."/>
            <person name="Davis R.W."/>
            <person name="Steinmetz L.M."/>
        </authorList>
    </citation>
    <scope>NUCLEOTIDE SEQUENCE [LARGE SCALE GENOMIC DNA]</scope>
    <source>
        <strain>YJM789</strain>
    </source>
</reference>
<dbReference type="EMBL" id="AAFW02000100">
    <property type="protein sequence ID" value="EDN61863.1"/>
    <property type="molecule type" value="Genomic_DNA"/>
</dbReference>
<dbReference type="HOGENOM" id="CLU_052839_0_0_1"/>
<dbReference type="Proteomes" id="UP000007060">
    <property type="component" value="Unassembled WGS sequence"/>
</dbReference>
<dbReference type="GO" id="GO:0005730">
    <property type="term" value="C:nucleolus"/>
    <property type="evidence" value="ECO:0007669"/>
    <property type="project" value="UniProtKB-SubCell"/>
</dbReference>
<dbReference type="GO" id="GO:0003676">
    <property type="term" value="F:nucleic acid binding"/>
    <property type="evidence" value="ECO:0007669"/>
    <property type="project" value="InterPro"/>
</dbReference>
<dbReference type="GO" id="GO:0006364">
    <property type="term" value="P:rRNA processing"/>
    <property type="evidence" value="ECO:0007669"/>
    <property type="project" value="UniProtKB-KW"/>
</dbReference>
<dbReference type="InterPro" id="IPR000467">
    <property type="entry name" value="G_patch_dom"/>
</dbReference>
<dbReference type="InterPro" id="IPR050656">
    <property type="entry name" value="PINX1"/>
</dbReference>
<dbReference type="PANTHER" id="PTHR23149">
    <property type="entry name" value="G PATCH DOMAIN CONTAINING PROTEIN"/>
    <property type="match status" value="1"/>
</dbReference>
<dbReference type="PANTHER" id="PTHR23149:SF31">
    <property type="entry name" value="PROTEIN PXR1"/>
    <property type="match status" value="1"/>
</dbReference>
<dbReference type="Pfam" id="PF01585">
    <property type="entry name" value="G-patch"/>
    <property type="match status" value="1"/>
</dbReference>
<dbReference type="SMART" id="SM00443">
    <property type="entry name" value="G_patch"/>
    <property type="match status" value="1"/>
</dbReference>
<dbReference type="PROSITE" id="PS50174">
    <property type="entry name" value="G_PATCH"/>
    <property type="match status" value="1"/>
</dbReference>
<gene>
    <name type="primary">PXR1</name>
    <name type="synonym">GNO1</name>
    <name type="ORF">SCY_2169</name>
</gene>
<protein>
    <recommendedName>
        <fullName>Protein PXR1</fullName>
    </recommendedName>
    <alternativeName>
        <fullName>G-patch nucleolar protein</fullName>
    </alternativeName>
    <alternativeName>
        <fullName>PinX1-related protein 1</fullName>
    </alternativeName>
</protein>
<name>PXR1_YEAS7</name>
<evidence type="ECO:0000250" key="1"/>
<evidence type="ECO:0000250" key="2">
    <source>
        <dbReference type="UniProtKB" id="P53335"/>
    </source>
</evidence>
<evidence type="ECO:0000255" key="3">
    <source>
        <dbReference type="PROSITE-ProRule" id="PRU00092"/>
    </source>
</evidence>
<evidence type="ECO:0000256" key="4">
    <source>
        <dbReference type="SAM" id="MobiDB-lite"/>
    </source>
</evidence>
<evidence type="ECO:0000305" key="5"/>
<sequence>MGLAATRTKQRFGLDPRNTAWSNDTSRFGHQFLEKFGWKPGMGLGLYPMNSNTSHIKVSIKDDNVGLGAKLKRKDKKDEFDNGECAGLDVFQRILGRLNGKESKISEELDTQRKQKIIDGKWGIHFVKGEVLASTWDPKTHKLRNYSNAKKRKREGDDSEDEDDDDKEDKDSDKKKHKKHKKHKKDKKKDKKDKKEHKKHKKEEKRLKKEKRAEKTKETKKTSKLKSSESASNIPDAVNTRLSVRSKWIKQKRAALMDSKALNEIFMITND</sequence>
<keyword id="KW-0539">Nucleus</keyword>
<keyword id="KW-0597">Phosphoprotein</keyword>
<keyword id="KW-0690">Ribosome biogenesis</keyword>
<keyword id="KW-0698">rRNA processing</keyword>